<organism>
    <name type="scientific">Chromohalobacter salexigens (strain ATCC BAA-138 / DSM 3043 / CIP 106854 / NCIMB 13768 / 1H11)</name>
    <dbReference type="NCBI Taxonomy" id="290398"/>
    <lineage>
        <taxon>Bacteria</taxon>
        <taxon>Pseudomonadati</taxon>
        <taxon>Pseudomonadota</taxon>
        <taxon>Gammaproteobacteria</taxon>
        <taxon>Oceanospirillales</taxon>
        <taxon>Halomonadaceae</taxon>
        <taxon>Chromohalobacter</taxon>
    </lineage>
</organism>
<gene>
    <name evidence="1" type="primary">panB</name>
    <name type="ordered locus">Csal_3065</name>
</gene>
<keyword id="KW-0963">Cytoplasm</keyword>
<keyword id="KW-0460">Magnesium</keyword>
<keyword id="KW-0479">Metal-binding</keyword>
<keyword id="KW-0566">Pantothenate biosynthesis</keyword>
<keyword id="KW-1185">Reference proteome</keyword>
<keyword id="KW-0808">Transferase</keyword>
<accession>Q1QSZ9</accession>
<reference key="1">
    <citation type="journal article" date="2011" name="Stand. Genomic Sci.">
        <title>Complete genome sequence of the halophilic and highly halotolerant Chromohalobacter salexigens type strain (1H11(T)).</title>
        <authorList>
            <person name="Copeland A."/>
            <person name="O'Connor K."/>
            <person name="Lucas S."/>
            <person name="Lapidus A."/>
            <person name="Berry K.W."/>
            <person name="Detter J.C."/>
            <person name="Del Rio T.G."/>
            <person name="Hammon N."/>
            <person name="Dalin E."/>
            <person name="Tice H."/>
            <person name="Pitluck S."/>
            <person name="Bruce D."/>
            <person name="Goodwin L."/>
            <person name="Han C."/>
            <person name="Tapia R."/>
            <person name="Saunders E."/>
            <person name="Schmutz J."/>
            <person name="Brettin T."/>
            <person name="Larimer F."/>
            <person name="Land M."/>
            <person name="Hauser L."/>
            <person name="Vargas C."/>
            <person name="Nieto J.J."/>
            <person name="Kyrpides N.C."/>
            <person name="Ivanova N."/>
            <person name="Goker M."/>
            <person name="Klenk H.P."/>
            <person name="Csonka L.N."/>
            <person name="Woyke T."/>
        </authorList>
    </citation>
    <scope>NUCLEOTIDE SEQUENCE [LARGE SCALE GENOMIC DNA]</scope>
    <source>
        <strain>ATCC BAA-138 / DSM 3043 / CIP 106854 / NCIMB 13768 / 1H11</strain>
    </source>
</reference>
<sequence length="263" mass="28345">MKTVTLSRLNAFKHAQEPFSCLTAYDASFAQHADAAGIDVLLVGDSLGMVLQGHASTLPVTLDDILYHTRCVARGKQRSLLMVDLPFMSNADTGQLLRDAGALMRAGAELVKIEGAGWMHEGVRELTRRGVPVCAHLGLTPQSVHQFGGYKVQGREQDDAQRIIDDARLLVEAGASVILLECVPAALGRAVRDAVDVPVIGIGAGPEVDGQILVMHDVIGVTHGRPPRFAKNFLAGRDSIQAAFEAYRDAVKTRQFPAEEHCF</sequence>
<proteinExistence type="inferred from homology"/>
<evidence type="ECO:0000255" key="1">
    <source>
        <dbReference type="HAMAP-Rule" id="MF_00156"/>
    </source>
</evidence>
<dbReference type="EC" id="2.1.2.11" evidence="1"/>
<dbReference type="EMBL" id="CP000285">
    <property type="protein sequence ID" value="ABE60409.1"/>
    <property type="molecule type" value="Genomic_DNA"/>
</dbReference>
<dbReference type="RefSeq" id="WP_011508355.1">
    <property type="nucleotide sequence ID" value="NC_007963.1"/>
</dbReference>
<dbReference type="SMR" id="Q1QSZ9"/>
<dbReference type="STRING" id="290398.Csal_3065"/>
<dbReference type="GeneID" id="95335759"/>
<dbReference type="KEGG" id="csa:Csal_3065"/>
<dbReference type="eggNOG" id="COG0413">
    <property type="taxonomic scope" value="Bacteria"/>
</dbReference>
<dbReference type="HOGENOM" id="CLU_036645_1_0_6"/>
<dbReference type="OrthoDB" id="9781789at2"/>
<dbReference type="UniPathway" id="UPA00028">
    <property type="reaction ID" value="UER00003"/>
</dbReference>
<dbReference type="Proteomes" id="UP000000239">
    <property type="component" value="Chromosome"/>
</dbReference>
<dbReference type="GO" id="GO:0005737">
    <property type="term" value="C:cytoplasm"/>
    <property type="evidence" value="ECO:0007669"/>
    <property type="project" value="UniProtKB-SubCell"/>
</dbReference>
<dbReference type="GO" id="GO:0003864">
    <property type="term" value="F:3-methyl-2-oxobutanoate hydroxymethyltransferase activity"/>
    <property type="evidence" value="ECO:0007669"/>
    <property type="project" value="UniProtKB-UniRule"/>
</dbReference>
<dbReference type="GO" id="GO:0000287">
    <property type="term" value="F:magnesium ion binding"/>
    <property type="evidence" value="ECO:0007669"/>
    <property type="project" value="TreeGrafter"/>
</dbReference>
<dbReference type="GO" id="GO:0015940">
    <property type="term" value="P:pantothenate biosynthetic process"/>
    <property type="evidence" value="ECO:0007669"/>
    <property type="project" value="UniProtKB-UniRule"/>
</dbReference>
<dbReference type="CDD" id="cd06557">
    <property type="entry name" value="KPHMT-like"/>
    <property type="match status" value="1"/>
</dbReference>
<dbReference type="FunFam" id="3.20.20.60:FF:000003">
    <property type="entry name" value="3-methyl-2-oxobutanoate hydroxymethyltransferase"/>
    <property type="match status" value="1"/>
</dbReference>
<dbReference type="Gene3D" id="3.20.20.60">
    <property type="entry name" value="Phosphoenolpyruvate-binding domains"/>
    <property type="match status" value="1"/>
</dbReference>
<dbReference type="HAMAP" id="MF_00156">
    <property type="entry name" value="PanB"/>
    <property type="match status" value="1"/>
</dbReference>
<dbReference type="InterPro" id="IPR003700">
    <property type="entry name" value="Pantoate_hydroxy_MeTrfase"/>
</dbReference>
<dbReference type="InterPro" id="IPR015813">
    <property type="entry name" value="Pyrv/PenolPyrv_kinase-like_dom"/>
</dbReference>
<dbReference type="InterPro" id="IPR040442">
    <property type="entry name" value="Pyrv_kinase-like_dom_sf"/>
</dbReference>
<dbReference type="NCBIfam" id="TIGR00222">
    <property type="entry name" value="panB"/>
    <property type="match status" value="1"/>
</dbReference>
<dbReference type="NCBIfam" id="NF001452">
    <property type="entry name" value="PRK00311.1"/>
    <property type="match status" value="1"/>
</dbReference>
<dbReference type="PANTHER" id="PTHR20881">
    <property type="entry name" value="3-METHYL-2-OXOBUTANOATE HYDROXYMETHYLTRANSFERASE"/>
    <property type="match status" value="1"/>
</dbReference>
<dbReference type="PANTHER" id="PTHR20881:SF0">
    <property type="entry name" value="3-METHYL-2-OXOBUTANOATE HYDROXYMETHYLTRANSFERASE"/>
    <property type="match status" value="1"/>
</dbReference>
<dbReference type="Pfam" id="PF02548">
    <property type="entry name" value="Pantoate_transf"/>
    <property type="match status" value="1"/>
</dbReference>
<dbReference type="PIRSF" id="PIRSF000388">
    <property type="entry name" value="Pantoate_hydroxy_MeTrfase"/>
    <property type="match status" value="1"/>
</dbReference>
<dbReference type="SUPFAM" id="SSF51621">
    <property type="entry name" value="Phosphoenolpyruvate/pyruvate domain"/>
    <property type="match status" value="1"/>
</dbReference>
<comment type="function">
    <text evidence="1">Catalyzes the reversible reaction in which hydroxymethyl group from 5,10-methylenetetrahydrofolate is transferred onto alpha-ketoisovalerate to form ketopantoate.</text>
</comment>
<comment type="catalytic activity">
    <reaction evidence="1">
        <text>3-methyl-2-oxobutanoate + (6R)-5,10-methylene-5,6,7,8-tetrahydrofolate + H2O = 2-dehydropantoate + (6S)-5,6,7,8-tetrahydrofolate</text>
        <dbReference type="Rhea" id="RHEA:11824"/>
        <dbReference type="ChEBI" id="CHEBI:11561"/>
        <dbReference type="ChEBI" id="CHEBI:11851"/>
        <dbReference type="ChEBI" id="CHEBI:15377"/>
        <dbReference type="ChEBI" id="CHEBI:15636"/>
        <dbReference type="ChEBI" id="CHEBI:57453"/>
        <dbReference type="EC" id="2.1.2.11"/>
    </reaction>
</comment>
<comment type="cofactor">
    <cofactor evidence="1">
        <name>Mg(2+)</name>
        <dbReference type="ChEBI" id="CHEBI:18420"/>
    </cofactor>
    <text evidence="1">Binds 1 Mg(2+) ion per subunit.</text>
</comment>
<comment type="pathway">
    <text evidence="1">Cofactor biosynthesis; (R)-pantothenate biosynthesis; (R)-pantoate from 3-methyl-2-oxobutanoate: step 1/2.</text>
</comment>
<comment type="subunit">
    <text evidence="1">Homodecamer; pentamer of dimers.</text>
</comment>
<comment type="subcellular location">
    <subcellularLocation>
        <location evidence="1">Cytoplasm</location>
    </subcellularLocation>
</comment>
<comment type="similarity">
    <text evidence="1">Belongs to the PanB family.</text>
</comment>
<feature type="chain" id="PRO_0000297245" description="3-methyl-2-oxobutanoate hydroxymethyltransferase">
    <location>
        <begin position="1"/>
        <end position="263"/>
    </location>
</feature>
<feature type="active site" description="Proton acceptor" evidence="1">
    <location>
        <position position="181"/>
    </location>
</feature>
<feature type="binding site" evidence="1">
    <location>
        <begin position="45"/>
        <end position="46"/>
    </location>
    <ligand>
        <name>3-methyl-2-oxobutanoate</name>
        <dbReference type="ChEBI" id="CHEBI:11851"/>
    </ligand>
</feature>
<feature type="binding site" evidence="1">
    <location>
        <position position="45"/>
    </location>
    <ligand>
        <name>Mg(2+)</name>
        <dbReference type="ChEBI" id="CHEBI:18420"/>
    </ligand>
</feature>
<feature type="binding site" evidence="1">
    <location>
        <position position="84"/>
    </location>
    <ligand>
        <name>3-methyl-2-oxobutanoate</name>
        <dbReference type="ChEBI" id="CHEBI:11851"/>
    </ligand>
</feature>
<feature type="binding site" evidence="1">
    <location>
        <position position="84"/>
    </location>
    <ligand>
        <name>Mg(2+)</name>
        <dbReference type="ChEBI" id="CHEBI:18420"/>
    </ligand>
</feature>
<feature type="binding site" evidence="1">
    <location>
        <position position="112"/>
    </location>
    <ligand>
        <name>3-methyl-2-oxobutanoate</name>
        <dbReference type="ChEBI" id="CHEBI:11851"/>
    </ligand>
</feature>
<feature type="binding site" evidence="1">
    <location>
        <position position="114"/>
    </location>
    <ligand>
        <name>Mg(2+)</name>
        <dbReference type="ChEBI" id="CHEBI:18420"/>
    </ligand>
</feature>
<protein>
    <recommendedName>
        <fullName evidence="1">3-methyl-2-oxobutanoate hydroxymethyltransferase</fullName>
        <ecNumber evidence="1">2.1.2.11</ecNumber>
    </recommendedName>
    <alternativeName>
        <fullName evidence="1">Ketopantoate hydroxymethyltransferase</fullName>
        <shortName evidence="1">KPHMT</shortName>
    </alternativeName>
</protein>
<name>PANB_CHRSD</name>